<name>CYC1_CLITE</name>
<feature type="peptide" id="PRO_0000440047" description="Cliotide T1" evidence="3">
    <location>
        <begin position="1"/>
        <end position="30"/>
    </location>
</feature>
<feature type="propeptide" id="PRO_0000440048" description="Removed in mature form" evidence="3">
    <location>
        <begin position="31"/>
        <end position="95"/>
    </location>
</feature>
<feature type="disulfide bond" evidence="2">
    <location>
        <begin position="4"/>
        <end position="20"/>
    </location>
</feature>
<feature type="disulfide bond" evidence="2">
    <location>
        <begin position="8"/>
        <end position="22"/>
    </location>
</feature>
<feature type="disulfide bond" evidence="2">
    <location>
        <begin position="13"/>
        <end position="27"/>
    </location>
</feature>
<feature type="cross-link" description="Cyclopeptide (Gly-Asn)" evidence="3">
    <location>
        <begin position="1"/>
        <end position="30"/>
    </location>
</feature>
<feature type="non-terminal residue" evidence="4">
    <location>
        <position position="1"/>
    </location>
</feature>
<keyword id="KW-0044">Antibiotic</keyword>
<keyword id="KW-0929">Antimicrobial</keyword>
<keyword id="KW-0204">Cytolysis</keyword>
<keyword id="KW-0903">Direct protein sequencing</keyword>
<keyword id="KW-1015">Disulfide bond</keyword>
<keyword id="KW-0354">Hemolysis</keyword>
<keyword id="KW-0960">Knottin</keyword>
<keyword id="KW-0611">Plant defense</keyword>
<protein>
    <recommendedName>
        <fullName evidence="4">Cliotide T1</fullName>
    </recommendedName>
</protein>
<comment type="function">
    <text evidence="1 2 3">Probably participates in a plant defense mechanism (Probable). Active against Gram-negative bacteria E.coli ATCC 700926 (MIC=1.1 uM), K.pneumoniae ATTC 13883 (MIC=2.7 uM) and P.aeruginosa ATCC 39018 (MIC=4.7 uM) (PubMed:21596752). Has hemolytic and cytotoxic activity (PubMed:21596752).</text>
</comment>
<comment type="tissue specificity">
    <text evidence="3">Expressed in flower, stem, shoot, root, leaf, seed, pod and nodule (at protein level).</text>
</comment>
<comment type="domain">
    <text evidence="5">The presence of a 'disulfide through disulfide knot' structurally defines this protein as a knottin.</text>
</comment>
<comment type="PTM">
    <text evidence="3">Contains 3 disulfide bonds.</text>
</comment>
<comment type="PTM">
    <text evidence="2 3">This is a cyclic peptide.</text>
</comment>
<comment type="mass spectrometry" mass="3083.0" method="MALDI" evidence="3"/>
<comment type="similarity">
    <text evidence="2">Belongs to the cyclotide family. Bracelet subfamily.</text>
</comment>
<dbReference type="EMBL" id="JF931988">
    <property type="protein sequence ID" value="AEK26402.1"/>
    <property type="molecule type" value="mRNA"/>
</dbReference>
<dbReference type="SMR" id="G1CWH0"/>
<dbReference type="GO" id="GO:0042742">
    <property type="term" value="P:defense response to bacterium"/>
    <property type="evidence" value="ECO:0007669"/>
    <property type="project" value="UniProtKB-KW"/>
</dbReference>
<dbReference type="GO" id="GO:0031640">
    <property type="term" value="P:killing of cells of another organism"/>
    <property type="evidence" value="ECO:0007669"/>
    <property type="project" value="UniProtKB-KW"/>
</dbReference>
<dbReference type="InterPro" id="IPR032000">
    <property type="entry name" value="Albumin_I_a"/>
</dbReference>
<dbReference type="InterPro" id="IPR005535">
    <property type="entry name" value="Cyclotide"/>
</dbReference>
<dbReference type="InterPro" id="IPR012323">
    <property type="entry name" value="Cyclotide_bracelet_CS"/>
</dbReference>
<dbReference type="InterPro" id="IPR036146">
    <property type="entry name" value="Cyclotide_sf"/>
</dbReference>
<dbReference type="Pfam" id="PF16720">
    <property type="entry name" value="Albumin_I_a"/>
    <property type="match status" value="1"/>
</dbReference>
<dbReference type="Pfam" id="PF03784">
    <property type="entry name" value="Cyclotide"/>
    <property type="match status" value="1"/>
</dbReference>
<dbReference type="SUPFAM" id="SSF57038">
    <property type="entry name" value="Cyclotides"/>
    <property type="match status" value="1"/>
</dbReference>
<dbReference type="PROSITE" id="PS51052">
    <property type="entry name" value="CYCLOTIDE"/>
    <property type="match status" value="1"/>
</dbReference>
<dbReference type="PROSITE" id="PS60008">
    <property type="entry name" value="CYCLOTIDE_BRACELET"/>
    <property type="match status" value="1"/>
</dbReference>
<evidence type="ECO:0000255" key="1"/>
<evidence type="ECO:0000255" key="2">
    <source>
        <dbReference type="PROSITE-ProRule" id="PRU00395"/>
    </source>
</evidence>
<evidence type="ECO:0000269" key="3">
    <source>
    </source>
</evidence>
<evidence type="ECO:0000303" key="4">
    <source>
    </source>
</evidence>
<evidence type="ECO:0000305" key="5"/>
<evidence type="ECO:0000312" key="6">
    <source>
        <dbReference type="EMBL" id="AEK26402.1"/>
    </source>
</evidence>
<reference evidence="6" key="1">
    <citation type="journal article" date="2011" name="J. Biol. Chem.">
        <title>Discovery and characterization of novel cyclotides originated from chimeric precursors consisting of albumin-1 chain a and cyclotide domains in the fabaceae family.</title>
        <authorList>
            <person name="Nguyen G.K."/>
            <person name="Zhang S."/>
            <person name="Nguyen N.T."/>
            <person name="Nguyen P.Q."/>
            <person name="Chiu M.S."/>
            <person name="Hardjojo A."/>
            <person name="Tam J.P."/>
        </authorList>
    </citation>
    <scope>NUCLEOTIDE SEQUENCE [MRNA] OF 2-95</scope>
    <scope>PROTEIN SEQUENCE OF 1-30</scope>
    <scope>FUNCTION</scope>
    <scope>PRESENCE OF DISULFIDE BONDS</scope>
    <scope>CYCLIZATION</scope>
    <scope>TISSUE SPECIFICITY</scope>
    <scope>MASS SPECTROMETRY</scope>
    <scope>IDENTIFICATION BY MASS SPECTROMETRY</scope>
</reference>
<proteinExistence type="evidence at protein level"/>
<accession>G1CWH0</accession>
<sequence length="95" mass="10476">GIPCGESCVFIPCITGAIGCSCKSKVCYRNHVIAAEAKTMDDHHLLCQSHEDCITKGTGNFCAPFPDQDIKYGWCFRAESEGFMLKDHLKMSITN</sequence>
<organism evidence="6">
    <name type="scientific">Clitoria ternatea</name>
    <name type="common">Butterfly pea</name>
    <dbReference type="NCBI Taxonomy" id="43366"/>
    <lineage>
        <taxon>Eukaryota</taxon>
        <taxon>Viridiplantae</taxon>
        <taxon>Streptophyta</taxon>
        <taxon>Embryophyta</taxon>
        <taxon>Tracheophyta</taxon>
        <taxon>Spermatophyta</taxon>
        <taxon>Magnoliopsida</taxon>
        <taxon>eudicotyledons</taxon>
        <taxon>Gunneridae</taxon>
        <taxon>Pentapetalae</taxon>
        <taxon>rosids</taxon>
        <taxon>fabids</taxon>
        <taxon>Fabales</taxon>
        <taxon>Fabaceae</taxon>
        <taxon>Papilionoideae</taxon>
        <taxon>50 kb inversion clade</taxon>
        <taxon>NPAAA clade</taxon>
        <taxon>indigoferoid/millettioid clade</taxon>
        <taxon>Phaseoleae</taxon>
        <taxon>Clitoria</taxon>
    </lineage>
</organism>